<gene>
    <name evidence="1" type="primary">nuoN</name>
    <name type="ordered locus">EcE24377A_2569</name>
</gene>
<comment type="function">
    <text evidence="1">NDH-1 shuttles electrons from NADH, via FMN and iron-sulfur (Fe-S) centers, to quinones in the respiratory chain. The immediate electron acceptor for the enzyme in this species is believed to be ubiquinone. Couples the redox reaction to proton translocation (for every two electrons transferred, four hydrogen ions are translocated across the cytoplasmic membrane), and thus conserves the redox energy in a proton gradient.</text>
</comment>
<comment type="catalytic activity">
    <reaction evidence="1">
        <text>a quinone + NADH + 5 H(+)(in) = a quinol + NAD(+) + 4 H(+)(out)</text>
        <dbReference type="Rhea" id="RHEA:57888"/>
        <dbReference type="ChEBI" id="CHEBI:15378"/>
        <dbReference type="ChEBI" id="CHEBI:24646"/>
        <dbReference type="ChEBI" id="CHEBI:57540"/>
        <dbReference type="ChEBI" id="CHEBI:57945"/>
        <dbReference type="ChEBI" id="CHEBI:132124"/>
    </reaction>
</comment>
<comment type="subunit">
    <text evidence="1">NDH-1 is composed of 13 different subunits. Subunits NuoA, H, J, K, L, M, N constitute the membrane sector of the complex.</text>
</comment>
<comment type="subcellular location">
    <subcellularLocation>
        <location evidence="1">Cell inner membrane</location>
        <topology evidence="1">Multi-pass membrane protein</topology>
    </subcellularLocation>
</comment>
<comment type="similarity">
    <text evidence="1">Belongs to the complex I subunit 2 family.</text>
</comment>
<reference key="1">
    <citation type="journal article" date="2008" name="J. Bacteriol.">
        <title>The pangenome structure of Escherichia coli: comparative genomic analysis of E. coli commensal and pathogenic isolates.</title>
        <authorList>
            <person name="Rasko D.A."/>
            <person name="Rosovitz M.J."/>
            <person name="Myers G.S.A."/>
            <person name="Mongodin E.F."/>
            <person name="Fricke W.F."/>
            <person name="Gajer P."/>
            <person name="Crabtree J."/>
            <person name="Sebaihia M."/>
            <person name="Thomson N.R."/>
            <person name="Chaudhuri R."/>
            <person name="Henderson I.R."/>
            <person name="Sperandio V."/>
            <person name="Ravel J."/>
        </authorList>
    </citation>
    <scope>NUCLEOTIDE SEQUENCE [LARGE SCALE GENOMIC DNA]</scope>
    <source>
        <strain>E24377A / ETEC</strain>
    </source>
</reference>
<evidence type="ECO:0000255" key="1">
    <source>
        <dbReference type="HAMAP-Rule" id="MF_00445"/>
    </source>
</evidence>
<proteinExistence type="inferred from homology"/>
<protein>
    <recommendedName>
        <fullName evidence="1">NADH-quinone oxidoreductase subunit N</fullName>
        <ecNumber evidence="1">7.1.1.-</ecNumber>
    </recommendedName>
    <alternativeName>
        <fullName evidence="1">NADH dehydrogenase I subunit N</fullName>
    </alternativeName>
    <alternativeName>
        <fullName evidence="1">NDH-1 subunit N</fullName>
    </alternativeName>
</protein>
<keyword id="KW-0997">Cell inner membrane</keyword>
<keyword id="KW-1003">Cell membrane</keyword>
<keyword id="KW-0472">Membrane</keyword>
<keyword id="KW-0520">NAD</keyword>
<keyword id="KW-0874">Quinone</keyword>
<keyword id="KW-1185">Reference proteome</keyword>
<keyword id="KW-1278">Translocase</keyword>
<keyword id="KW-0812">Transmembrane</keyword>
<keyword id="KW-1133">Transmembrane helix</keyword>
<keyword id="KW-0813">Transport</keyword>
<keyword id="KW-0830">Ubiquinone</keyword>
<sequence>MTITPQNLIALLPLLIVGLTVVVVMLSIAWRRNHFLNATLSVIGLNAALVSLWFVGQAGAMDVTPLMRVDGFAMLYTGLVLLASLATCTFAYPWLEGYNDNKDEFYLLVLIAALGGILLANANHLASLFLGIELISLPLFGLVGYAFRQKRSLEASIKYTILSAAASSFLLFGMALVYAQSGDLSFVALGKNLGDGMLNEPLLLAGFGLMIVGLGFKLSLVPFHLWTPDVYQGAPAPVSTFLATASKIAIFGVVMRLFLYAPVGDSEAIRVVLAIIAFASIIFGNLMALSQTNIKRLLGYSSISHLGYLLVALIALQTGEMSMEAVGVYLAGYLFSSLGAFGVVSLMSSPYRGPDADSLFSYRGLFWHRPILAAVMTVMMLSLAGIPMTLGFIGKFYVLAVGVQAHLWWLVGAVVVGSAIGLYYYLRVAVSLYLHAPEQPGRDAPSNWQYSAGGIVVLISALLVLVLGVWPQPLISIVRLAMPLM</sequence>
<name>NUON_ECO24</name>
<feature type="chain" id="PRO_1000068537" description="NADH-quinone oxidoreductase subunit N">
    <location>
        <begin position="1"/>
        <end position="485"/>
    </location>
</feature>
<feature type="transmembrane region" description="Helical" evidence="1">
    <location>
        <begin position="8"/>
        <end position="28"/>
    </location>
</feature>
<feature type="transmembrane region" description="Helical" evidence="1">
    <location>
        <begin position="35"/>
        <end position="55"/>
    </location>
</feature>
<feature type="transmembrane region" description="Helical" evidence="1">
    <location>
        <begin position="71"/>
        <end position="91"/>
    </location>
</feature>
<feature type="transmembrane region" description="Helical" evidence="1">
    <location>
        <begin position="105"/>
        <end position="125"/>
    </location>
</feature>
<feature type="transmembrane region" description="Helical" evidence="1">
    <location>
        <begin position="127"/>
        <end position="147"/>
    </location>
</feature>
<feature type="transmembrane region" description="Helical" evidence="1">
    <location>
        <begin position="159"/>
        <end position="179"/>
    </location>
</feature>
<feature type="transmembrane region" description="Helical" evidence="1">
    <location>
        <begin position="203"/>
        <end position="223"/>
    </location>
</feature>
<feature type="transmembrane region" description="Helical" evidence="1">
    <location>
        <begin position="235"/>
        <end position="255"/>
    </location>
</feature>
<feature type="transmembrane region" description="Helical" evidence="1">
    <location>
        <begin position="271"/>
        <end position="291"/>
    </location>
</feature>
<feature type="transmembrane region" description="Helical" evidence="1">
    <location>
        <begin position="297"/>
        <end position="317"/>
    </location>
</feature>
<feature type="transmembrane region" description="Helical" evidence="1">
    <location>
        <begin position="326"/>
        <end position="346"/>
    </location>
</feature>
<feature type="transmembrane region" description="Helical" evidence="1">
    <location>
        <begin position="373"/>
        <end position="393"/>
    </location>
</feature>
<feature type="transmembrane region" description="Helical" evidence="1">
    <location>
        <begin position="408"/>
        <end position="430"/>
    </location>
</feature>
<feature type="transmembrane region" description="Helical" evidence="1">
    <location>
        <begin position="455"/>
        <end position="475"/>
    </location>
</feature>
<dbReference type="EC" id="7.1.1.-" evidence="1"/>
<dbReference type="EMBL" id="CP000800">
    <property type="protein sequence ID" value="ABV18164.1"/>
    <property type="molecule type" value="Genomic_DNA"/>
</dbReference>
<dbReference type="RefSeq" id="WP_000156701.1">
    <property type="nucleotide sequence ID" value="NC_009801.1"/>
</dbReference>
<dbReference type="SMR" id="A7ZP90"/>
<dbReference type="GeneID" id="75205678"/>
<dbReference type="KEGG" id="ecw:EcE24377A_2569"/>
<dbReference type="HOGENOM" id="CLU_007100_1_5_6"/>
<dbReference type="Proteomes" id="UP000001122">
    <property type="component" value="Chromosome"/>
</dbReference>
<dbReference type="GO" id="GO:0005886">
    <property type="term" value="C:plasma membrane"/>
    <property type="evidence" value="ECO:0007669"/>
    <property type="project" value="UniProtKB-SubCell"/>
</dbReference>
<dbReference type="GO" id="GO:0008137">
    <property type="term" value="F:NADH dehydrogenase (ubiquinone) activity"/>
    <property type="evidence" value="ECO:0007669"/>
    <property type="project" value="InterPro"/>
</dbReference>
<dbReference type="GO" id="GO:0050136">
    <property type="term" value="F:NADH:ubiquinone reductase (non-electrogenic) activity"/>
    <property type="evidence" value="ECO:0007669"/>
    <property type="project" value="UniProtKB-UniRule"/>
</dbReference>
<dbReference type="GO" id="GO:0048038">
    <property type="term" value="F:quinone binding"/>
    <property type="evidence" value="ECO:0007669"/>
    <property type="project" value="UniProtKB-KW"/>
</dbReference>
<dbReference type="GO" id="GO:0042773">
    <property type="term" value="P:ATP synthesis coupled electron transport"/>
    <property type="evidence" value="ECO:0007669"/>
    <property type="project" value="InterPro"/>
</dbReference>
<dbReference type="HAMAP" id="MF_00445">
    <property type="entry name" value="NDH1_NuoN_1"/>
    <property type="match status" value="1"/>
</dbReference>
<dbReference type="InterPro" id="IPR010096">
    <property type="entry name" value="NADH-Q_OxRdtase_suN/2"/>
</dbReference>
<dbReference type="InterPro" id="IPR001750">
    <property type="entry name" value="ND/Mrp_TM"/>
</dbReference>
<dbReference type="NCBIfam" id="TIGR01770">
    <property type="entry name" value="NDH_I_N"/>
    <property type="match status" value="1"/>
</dbReference>
<dbReference type="NCBIfam" id="NF004439">
    <property type="entry name" value="PRK05777.1-1"/>
    <property type="match status" value="1"/>
</dbReference>
<dbReference type="PANTHER" id="PTHR22773">
    <property type="entry name" value="NADH DEHYDROGENASE"/>
    <property type="match status" value="1"/>
</dbReference>
<dbReference type="Pfam" id="PF00361">
    <property type="entry name" value="Proton_antipo_M"/>
    <property type="match status" value="1"/>
</dbReference>
<organism>
    <name type="scientific">Escherichia coli O139:H28 (strain E24377A / ETEC)</name>
    <dbReference type="NCBI Taxonomy" id="331111"/>
    <lineage>
        <taxon>Bacteria</taxon>
        <taxon>Pseudomonadati</taxon>
        <taxon>Pseudomonadota</taxon>
        <taxon>Gammaproteobacteria</taxon>
        <taxon>Enterobacterales</taxon>
        <taxon>Enterobacteriaceae</taxon>
        <taxon>Escherichia</taxon>
    </lineage>
</organism>
<accession>A7ZP90</accession>